<accession>Q9FLI5</accession>
<accession>Q8GXE5</accession>
<organism>
    <name type="scientific">Arabidopsis thaliana</name>
    <name type="common">Mouse-ear cress</name>
    <dbReference type="NCBI Taxonomy" id="3702"/>
    <lineage>
        <taxon>Eukaryota</taxon>
        <taxon>Viridiplantae</taxon>
        <taxon>Streptophyta</taxon>
        <taxon>Embryophyta</taxon>
        <taxon>Tracheophyta</taxon>
        <taxon>Spermatophyta</taxon>
        <taxon>Magnoliopsida</taxon>
        <taxon>eudicotyledons</taxon>
        <taxon>Gunneridae</taxon>
        <taxon>Pentapetalae</taxon>
        <taxon>rosids</taxon>
        <taxon>malvids</taxon>
        <taxon>Brassicales</taxon>
        <taxon>Brassicaceae</taxon>
        <taxon>Camelineae</taxon>
        <taxon>Arabidopsis</taxon>
    </lineage>
</organism>
<feature type="transit peptide" description="Mitochondrion" evidence="3">
    <location>
        <begin position="1"/>
        <end position="16"/>
    </location>
</feature>
<feature type="chain" id="PRO_0000457991" description="Mitochondrial metalloendopeptidase OMA1" evidence="3">
    <location>
        <begin position="17"/>
        <end position="485"/>
    </location>
</feature>
<feature type="topological domain" description="Mitochondrial matrix" evidence="7">
    <location>
        <begin position="17"/>
        <end position="147"/>
    </location>
</feature>
<feature type="transmembrane region" description="Helical" evidence="3">
    <location>
        <begin position="148"/>
        <end position="168"/>
    </location>
</feature>
<feature type="topological domain" description="Mitochondrial intermembrane" evidence="7">
    <location>
        <begin position="169"/>
        <end position="485"/>
    </location>
</feature>
<feature type="region of interest" description="Required for protease activation" evidence="2">
    <location>
        <begin position="456"/>
        <end position="485"/>
    </location>
</feature>
<feature type="active site" evidence="4">
    <location>
        <position position="353"/>
    </location>
</feature>
<feature type="binding site" evidence="4">
    <location>
        <position position="352"/>
    </location>
    <ligand>
        <name>Zn(2+)</name>
        <dbReference type="ChEBI" id="CHEBI:29105"/>
        <note>catalytic</note>
    </ligand>
</feature>
<feature type="binding site" evidence="4">
    <location>
        <position position="356"/>
    </location>
    <ligand>
        <name>Zn(2+)</name>
        <dbReference type="ChEBI" id="CHEBI:29105"/>
        <note>catalytic</note>
    </ligand>
</feature>
<feature type="binding site" evidence="4">
    <location>
        <position position="405"/>
    </location>
    <ligand>
        <name>Zn(2+)</name>
        <dbReference type="ChEBI" id="CHEBI:29105"/>
        <note>catalytic</note>
    </ligand>
</feature>
<feature type="sequence conflict" description="In Ref. 3; BAC42898." evidence="7" ref="3">
    <original>F</original>
    <variation>V</variation>
    <location>
        <position position="16"/>
    </location>
</feature>
<reference key="1">
    <citation type="journal article" date="1998" name="DNA Res.">
        <title>Structural analysis of Arabidopsis thaliana chromosome 5. IV. Sequence features of the regions of 1,456,315 bp covered by nineteen physically assigned P1 and TAC clones.</title>
        <authorList>
            <person name="Sato S."/>
            <person name="Kaneko T."/>
            <person name="Kotani H."/>
            <person name="Nakamura Y."/>
            <person name="Asamizu E."/>
            <person name="Miyajima N."/>
            <person name="Tabata S."/>
        </authorList>
    </citation>
    <scope>NUCLEOTIDE SEQUENCE [LARGE SCALE GENOMIC DNA]</scope>
    <source>
        <strain>cv. Columbia</strain>
    </source>
</reference>
<reference key="2">
    <citation type="journal article" date="2017" name="Plant J.">
        <title>Araport11: a complete reannotation of the Arabidopsis thaliana reference genome.</title>
        <authorList>
            <person name="Cheng C.Y."/>
            <person name="Krishnakumar V."/>
            <person name="Chan A.P."/>
            <person name="Thibaud-Nissen F."/>
            <person name="Schobel S."/>
            <person name="Town C.D."/>
        </authorList>
    </citation>
    <scope>GENOME REANNOTATION</scope>
    <source>
        <strain>cv. Columbia</strain>
    </source>
</reference>
<reference key="3">
    <citation type="journal article" date="2002" name="Science">
        <title>Functional annotation of a full-length Arabidopsis cDNA collection.</title>
        <authorList>
            <person name="Seki M."/>
            <person name="Narusaka M."/>
            <person name="Kamiya A."/>
            <person name="Ishida J."/>
            <person name="Satou M."/>
            <person name="Sakurai T."/>
            <person name="Nakajima M."/>
            <person name="Enju A."/>
            <person name="Akiyama K."/>
            <person name="Oono Y."/>
            <person name="Muramatsu M."/>
            <person name="Hayashizaki Y."/>
            <person name="Kawai J."/>
            <person name="Carninci P."/>
            <person name="Itoh M."/>
            <person name="Ishii Y."/>
            <person name="Arakawa T."/>
            <person name="Shibata K."/>
            <person name="Shinagawa A."/>
            <person name="Shinozaki K."/>
        </authorList>
    </citation>
    <scope>NUCLEOTIDE SEQUENCE [LARGE SCALE MRNA] OF 16-485</scope>
    <source>
        <strain>cv. Columbia</strain>
    </source>
</reference>
<reference key="4">
    <citation type="journal article" date="2012" name="Physiol. Plantarum">
        <title>Proteolytic system of plant mitochondria.</title>
        <authorList>
            <person name="Kwasniak M."/>
            <person name="Pogorzelec L."/>
            <person name="Migdal I."/>
            <person name="Smakowska E."/>
            <person name="Janska H."/>
        </authorList>
    </citation>
    <scope>IDENTIFICATION</scope>
    <scope>REVIEW OF MITOCHONDRIAL PROTEOLYTIC SYSTEM</scope>
</reference>
<reference key="5">
    <citation type="journal article" date="2017" name="Front. Plant Sci.">
        <title>AtOMA1 affects the OXPHOS system and plant growth in contrast to other newly identified ATP-independent proteases in Arabidopsis mitochondria.</title>
        <authorList>
            <person name="Migdal I."/>
            <person name="Skibior-Blaszczyk R."/>
            <person name="Heidorn-Czarna M."/>
            <person name="Kolodziejczak M."/>
            <person name="Garbiec A."/>
            <person name="Janska H."/>
        </authorList>
    </citation>
    <scope>FUNCTION</scope>
    <scope>DISRUPTION PHENOTYPE</scope>
    <scope>SUBCELLULAR LOCATION</scope>
    <source>
        <strain>cv. Columbia</strain>
    </source>
</reference>
<evidence type="ECO:0000250" key="1">
    <source>
        <dbReference type="UniProtKB" id="O75844"/>
    </source>
</evidence>
<evidence type="ECO:0000250" key="2">
    <source>
        <dbReference type="UniProtKB" id="P36163"/>
    </source>
</evidence>
<evidence type="ECO:0000255" key="3"/>
<evidence type="ECO:0000255" key="4">
    <source>
        <dbReference type="PROSITE-ProRule" id="PRU10095"/>
    </source>
</evidence>
<evidence type="ECO:0000269" key="5">
    <source>
    </source>
</evidence>
<evidence type="ECO:0000303" key="6">
    <source>
    </source>
</evidence>
<evidence type="ECO:0000305" key="7"/>
<evidence type="ECO:0000312" key="8">
    <source>
        <dbReference type="Araport" id="AT5G51740"/>
    </source>
</evidence>
<evidence type="ECO:0000312" key="9">
    <source>
        <dbReference type="EMBL" id="BAB11243.1"/>
    </source>
</evidence>
<comment type="function">
    <text evidence="2 5">Protease that is part of the quality control system in the inner membrane of mitochondria (By similarity). Metalloendopeptidase that modulates the oxidative phosphorylation (OXPHOS) system and plant growth (PubMed:28936218). Involved in tolerance mechanisms to heat, osmotic and oxidative stresses (PubMed:28936218).</text>
</comment>
<comment type="cofactor">
    <cofactor evidence="1">
        <name>Zn(2+)</name>
        <dbReference type="ChEBI" id="CHEBI:29105"/>
    </cofactor>
    <text evidence="1">Binds 1 zinc ion per subunit.</text>
</comment>
<comment type="subunit">
    <text evidence="2">Homooligomer.</text>
</comment>
<comment type="subcellular location">
    <subcellularLocation>
        <location evidence="5">Mitochondrion inner membrane</location>
        <topology evidence="3">Single-pass membrane protein</topology>
    </subcellularLocation>
</comment>
<comment type="disruption phenotype">
    <text evidence="5">Retarded root growth and slight reduction in root length (PubMed:28936218). Increased sensitivity to heat stress (30 degrees Celsius), osmotic stress (mannitol) and oxidative stress (paraquat) leading to decreased seedling size and reduced root length (PubMed:28936218). Reduced activity of the oxidative phosphorylation (OXPHOS) system complex V and, in moderate heat stress conditions, of complex I and supercomplex I+III(2) (PubMed:28936218).</text>
</comment>
<comment type="similarity">
    <text evidence="7">Belongs to the peptidase M48A family.</text>
</comment>
<name>OMA1_ARATH</name>
<dbReference type="EC" id="3.4.24.-" evidence="2"/>
<dbReference type="EMBL" id="AB010074">
    <property type="protein sequence ID" value="BAB11243.1"/>
    <property type="molecule type" value="Genomic_DNA"/>
</dbReference>
<dbReference type="EMBL" id="CP002688">
    <property type="protein sequence ID" value="AED96121.1"/>
    <property type="molecule type" value="Genomic_DNA"/>
</dbReference>
<dbReference type="EMBL" id="CP002688">
    <property type="protein sequence ID" value="ANM69519.1"/>
    <property type="molecule type" value="Genomic_DNA"/>
</dbReference>
<dbReference type="EMBL" id="AK118280">
    <property type="protein sequence ID" value="BAC42898.1"/>
    <property type="molecule type" value="mRNA"/>
</dbReference>
<dbReference type="RefSeq" id="NP_001331189.1">
    <property type="nucleotide sequence ID" value="NM_001344955.1"/>
</dbReference>
<dbReference type="RefSeq" id="NP_199987.2">
    <property type="nucleotide sequence ID" value="NM_124553.3"/>
</dbReference>
<dbReference type="SMR" id="Q9FLI5"/>
<dbReference type="FunCoup" id="Q9FLI5">
    <property type="interactions" value="893"/>
</dbReference>
<dbReference type="STRING" id="3702.Q9FLI5"/>
<dbReference type="MEROPS" id="M48.A01"/>
<dbReference type="PaxDb" id="3702-AT5G51740.1"/>
<dbReference type="ProteomicsDB" id="178977"/>
<dbReference type="ProteomicsDB" id="252406"/>
<dbReference type="EnsemblPlants" id="AT5G51740.2">
    <property type="protein sequence ID" value="AT5G51740.2"/>
    <property type="gene ID" value="AT5G51740"/>
</dbReference>
<dbReference type="GeneID" id="835248"/>
<dbReference type="Gramene" id="AT5G51740.2">
    <property type="protein sequence ID" value="AT5G51740.2"/>
    <property type="gene ID" value="AT5G51740"/>
</dbReference>
<dbReference type="KEGG" id="ath:AT5G51740"/>
<dbReference type="Araport" id="AT5G51740"/>
<dbReference type="TAIR" id="AT5G51740">
    <property type="gene designation" value="OMA1"/>
</dbReference>
<dbReference type="eggNOG" id="KOG2661">
    <property type="taxonomic scope" value="Eukaryota"/>
</dbReference>
<dbReference type="HOGENOM" id="CLU_029002_8_1_1"/>
<dbReference type="InParanoid" id="Q9FLI5"/>
<dbReference type="PRO" id="PR:Q9FLI5"/>
<dbReference type="Proteomes" id="UP000006548">
    <property type="component" value="Chromosome 5"/>
</dbReference>
<dbReference type="ExpressionAtlas" id="Q9FLI5">
    <property type="expression patterns" value="baseline and differential"/>
</dbReference>
<dbReference type="GO" id="GO:0005743">
    <property type="term" value="C:mitochondrial inner membrane"/>
    <property type="evidence" value="ECO:0007669"/>
    <property type="project" value="UniProtKB-SubCell"/>
</dbReference>
<dbReference type="GO" id="GO:0005739">
    <property type="term" value="C:mitochondrion"/>
    <property type="evidence" value="ECO:0000314"/>
    <property type="project" value="UniProtKB"/>
</dbReference>
<dbReference type="GO" id="GO:0046872">
    <property type="term" value="F:metal ion binding"/>
    <property type="evidence" value="ECO:0007669"/>
    <property type="project" value="UniProtKB-KW"/>
</dbReference>
<dbReference type="GO" id="GO:0004222">
    <property type="term" value="F:metalloendopeptidase activity"/>
    <property type="evidence" value="ECO:0000314"/>
    <property type="project" value="UniProtKB"/>
</dbReference>
<dbReference type="GO" id="GO:0034605">
    <property type="term" value="P:cellular response to heat"/>
    <property type="evidence" value="ECO:0000315"/>
    <property type="project" value="UniProtKB"/>
</dbReference>
<dbReference type="GO" id="GO:0051603">
    <property type="term" value="P:proteolysis involved in protein catabolic process"/>
    <property type="evidence" value="ECO:0000314"/>
    <property type="project" value="UniProtKB"/>
</dbReference>
<dbReference type="GO" id="GO:0006970">
    <property type="term" value="P:response to osmotic stress"/>
    <property type="evidence" value="ECO:0000315"/>
    <property type="project" value="UniProtKB"/>
</dbReference>
<dbReference type="GO" id="GO:0006979">
    <property type="term" value="P:response to oxidative stress"/>
    <property type="evidence" value="ECO:0000315"/>
    <property type="project" value="UniProtKB"/>
</dbReference>
<dbReference type="CDD" id="cd07331">
    <property type="entry name" value="M48C_Oma1_like"/>
    <property type="match status" value="1"/>
</dbReference>
<dbReference type="FunFam" id="3.30.2010.10:FF:000019">
    <property type="entry name" value="Peptidase family M48 family protein"/>
    <property type="match status" value="1"/>
</dbReference>
<dbReference type="Gene3D" id="3.30.2010.10">
    <property type="entry name" value="Metalloproteases ('zincins'), catalytic domain"/>
    <property type="match status" value="1"/>
</dbReference>
<dbReference type="InterPro" id="IPR051156">
    <property type="entry name" value="Mito/Outer_Membr_Metalloprot"/>
</dbReference>
<dbReference type="InterPro" id="IPR001915">
    <property type="entry name" value="Peptidase_M48"/>
</dbReference>
<dbReference type="PANTHER" id="PTHR22726">
    <property type="entry name" value="METALLOENDOPEPTIDASE OMA1"/>
    <property type="match status" value="1"/>
</dbReference>
<dbReference type="PANTHER" id="PTHR22726:SF1">
    <property type="entry name" value="METALLOENDOPEPTIDASE OMA1, MITOCHONDRIAL"/>
    <property type="match status" value="1"/>
</dbReference>
<dbReference type="Pfam" id="PF01435">
    <property type="entry name" value="Peptidase_M48"/>
    <property type="match status" value="1"/>
</dbReference>
<dbReference type="PROSITE" id="PS00142">
    <property type="entry name" value="ZINC_PROTEASE"/>
    <property type="match status" value="1"/>
</dbReference>
<keyword id="KW-0378">Hydrolase</keyword>
<keyword id="KW-0472">Membrane</keyword>
<keyword id="KW-0479">Metal-binding</keyword>
<keyword id="KW-0482">Metalloprotease</keyword>
<keyword id="KW-0496">Mitochondrion</keyword>
<keyword id="KW-0999">Mitochondrion inner membrane</keyword>
<keyword id="KW-0645">Protease</keyword>
<keyword id="KW-1185">Reference proteome</keyword>
<keyword id="KW-0809">Transit peptide</keyword>
<keyword id="KW-0812">Transmembrane</keyword>
<keyword id="KW-1133">Transmembrane helix</keyword>
<keyword id="KW-0862">Zinc</keyword>
<sequence length="485" mass="54639">MKPSLKRRLLLLSRKFAKASIRKLLRQSSFSSHEFLLQAPFPAMSWYRRTKLVFDSLRRNINPKILPRSHVTSRINNPIGSSNPSAKFSSISSREVGLRSWTSLGRNTNRIAYNPFLSQPKRYYYVDRYQVRHFKPRGPGRWFQNPRTVFTVVLVGSVGLITLIVGNTETIPYTKRTHFILLSKPMEKLLGETQFEQIKKTYQGKILPATHPESIRVRLIAKEVIDALQRGLSNERVWSDLGYASTESSLGGGSDKGVKEMEMAMSGEDTMTDMKWSKEDQVLDDQWIQKSRKKDSKAHAATSHLEGISWEVLVVNEPIVNAFCLPAGKIVVFTGLLNHFKSDAEVATVIGHEVGHAVARHVAEGITKNLWFAILQLVLYQFVMPDLVNTMSALFLRLPFSRKMEIEADYIGLLLLASAGYDPRVAPTVYEKLGKLGGDALGDYLSTHPSGKKRSKLLAQANVMEEALMIYREVQAGRTGVEGFL</sequence>
<proteinExistence type="evidence at transcript level"/>
<protein>
    <recommendedName>
        <fullName evidence="6">Mitochondrial metalloendopeptidase OMA1</fullName>
        <shortName evidence="6">AtOMA1</shortName>
        <ecNumber evidence="2">3.4.24.-</ecNumber>
    </recommendedName>
</protein>
<gene>
    <name evidence="6" type="primary">OMA1</name>
    <name evidence="8" type="ordered locus">At5g51740</name>
    <name evidence="9" type="ORF">MIO24.13</name>
</gene>